<comment type="function">
    <text evidence="1">Involved in protein export. Acts as a chaperone by maintaining the newly synthesized protein in an open conformation. Functions as a peptidyl-prolyl cis-trans isomerase.</text>
</comment>
<comment type="catalytic activity">
    <reaction evidence="1">
        <text>[protein]-peptidylproline (omega=180) = [protein]-peptidylproline (omega=0)</text>
        <dbReference type="Rhea" id="RHEA:16237"/>
        <dbReference type="Rhea" id="RHEA-COMP:10747"/>
        <dbReference type="Rhea" id="RHEA-COMP:10748"/>
        <dbReference type="ChEBI" id="CHEBI:83833"/>
        <dbReference type="ChEBI" id="CHEBI:83834"/>
        <dbReference type="EC" id="5.2.1.8"/>
    </reaction>
</comment>
<comment type="subcellular location">
    <subcellularLocation>
        <location>Cytoplasm</location>
    </subcellularLocation>
    <text evidence="1">About half TF is bound to the ribosome near the polypeptide exit tunnel while the other half is free in the cytoplasm.</text>
</comment>
<comment type="domain">
    <text evidence="1">Consists of 3 domains; the N-terminus binds the ribosome, the middle domain has PPIase activity, while the C-terminus has intrinsic chaperone activity on its own.</text>
</comment>
<comment type="similarity">
    <text evidence="1">Belongs to the FKBP-type PPIase family. Tig subfamily.</text>
</comment>
<keyword id="KW-0131">Cell cycle</keyword>
<keyword id="KW-0132">Cell division</keyword>
<keyword id="KW-0143">Chaperone</keyword>
<keyword id="KW-0963">Cytoplasm</keyword>
<keyword id="KW-0413">Isomerase</keyword>
<keyword id="KW-0697">Rotamase</keyword>
<protein>
    <recommendedName>
        <fullName evidence="1">Trigger factor</fullName>
        <shortName evidence="1">TF</shortName>
        <ecNumber evidence="1">5.2.1.8</ecNumber>
    </recommendedName>
    <alternativeName>
        <fullName evidence="1">PPIase</fullName>
    </alternativeName>
</protein>
<dbReference type="EC" id="5.2.1.8" evidence="1"/>
<dbReference type="EMBL" id="CP001001">
    <property type="protein sequence ID" value="ACB27090.1"/>
    <property type="molecule type" value="Genomic_DNA"/>
</dbReference>
<dbReference type="RefSeq" id="WP_012322035.1">
    <property type="nucleotide sequence ID" value="NC_010505.1"/>
</dbReference>
<dbReference type="SMR" id="B1LV84"/>
<dbReference type="STRING" id="426355.Mrad2831_5133"/>
<dbReference type="GeneID" id="6141202"/>
<dbReference type="KEGG" id="mrd:Mrad2831_5133"/>
<dbReference type="PATRIC" id="fig|426355.14.peg.5206"/>
<dbReference type="eggNOG" id="COG0544">
    <property type="taxonomic scope" value="Bacteria"/>
</dbReference>
<dbReference type="HOGENOM" id="CLU_033058_2_2_5"/>
<dbReference type="OrthoDB" id="9767721at2"/>
<dbReference type="Proteomes" id="UP000006589">
    <property type="component" value="Chromosome"/>
</dbReference>
<dbReference type="GO" id="GO:0005737">
    <property type="term" value="C:cytoplasm"/>
    <property type="evidence" value="ECO:0007669"/>
    <property type="project" value="UniProtKB-SubCell"/>
</dbReference>
<dbReference type="GO" id="GO:0003755">
    <property type="term" value="F:peptidyl-prolyl cis-trans isomerase activity"/>
    <property type="evidence" value="ECO:0007669"/>
    <property type="project" value="UniProtKB-UniRule"/>
</dbReference>
<dbReference type="GO" id="GO:0044183">
    <property type="term" value="F:protein folding chaperone"/>
    <property type="evidence" value="ECO:0007669"/>
    <property type="project" value="TreeGrafter"/>
</dbReference>
<dbReference type="GO" id="GO:0043022">
    <property type="term" value="F:ribosome binding"/>
    <property type="evidence" value="ECO:0007669"/>
    <property type="project" value="TreeGrafter"/>
</dbReference>
<dbReference type="GO" id="GO:0051083">
    <property type="term" value="P:'de novo' cotranslational protein folding"/>
    <property type="evidence" value="ECO:0007669"/>
    <property type="project" value="TreeGrafter"/>
</dbReference>
<dbReference type="GO" id="GO:0051301">
    <property type="term" value="P:cell division"/>
    <property type="evidence" value="ECO:0007669"/>
    <property type="project" value="UniProtKB-KW"/>
</dbReference>
<dbReference type="GO" id="GO:0061077">
    <property type="term" value="P:chaperone-mediated protein folding"/>
    <property type="evidence" value="ECO:0007669"/>
    <property type="project" value="TreeGrafter"/>
</dbReference>
<dbReference type="GO" id="GO:0015031">
    <property type="term" value="P:protein transport"/>
    <property type="evidence" value="ECO:0007669"/>
    <property type="project" value="UniProtKB-UniRule"/>
</dbReference>
<dbReference type="GO" id="GO:0043335">
    <property type="term" value="P:protein unfolding"/>
    <property type="evidence" value="ECO:0007669"/>
    <property type="project" value="TreeGrafter"/>
</dbReference>
<dbReference type="FunFam" id="3.10.50.40:FF:000001">
    <property type="entry name" value="Trigger factor"/>
    <property type="match status" value="1"/>
</dbReference>
<dbReference type="Gene3D" id="3.10.50.40">
    <property type="match status" value="1"/>
</dbReference>
<dbReference type="Gene3D" id="3.30.70.1050">
    <property type="entry name" value="Trigger factor ribosome-binding domain"/>
    <property type="match status" value="1"/>
</dbReference>
<dbReference type="Gene3D" id="1.10.3120.10">
    <property type="entry name" value="Trigger factor, C-terminal domain"/>
    <property type="match status" value="1"/>
</dbReference>
<dbReference type="HAMAP" id="MF_00303">
    <property type="entry name" value="Trigger_factor_Tig"/>
    <property type="match status" value="1"/>
</dbReference>
<dbReference type="InterPro" id="IPR046357">
    <property type="entry name" value="PPIase_dom_sf"/>
</dbReference>
<dbReference type="InterPro" id="IPR001179">
    <property type="entry name" value="PPIase_FKBP_dom"/>
</dbReference>
<dbReference type="InterPro" id="IPR005215">
    <property type="entry name" value="Trig_fac"/>
</dbReference>
<dbReference type="InterPro" id="IPR008880">
    <property type="entry name" value="Trigger_fac_C"/>
</dbReference>
<dbReference type="InterPro" id="IPR037041">
    <property type="entry name" value="Trigger_fac_C_sf"/>
</dbReference>
<dbReference type="InterPro" id="IPR008881">
    <property type="entry name" value="Trigger_fac_ribosome-bd_bac"/>
</dbReference>
<dbReference type="InterPro" id="IPR036611">
    <property type="entry name" value="Trigger_fac_ribosome-bd_sf"/>
</dbReference>
<dbReference type="InterPro" id="IPR027304">
    <property type="entry name" value="Trigger_fact/SurA_dom_sf"/>
</dbReference>
<dbReference type="NCBIfam" id="TIGR00115">
    <property type="entry name" value="tig"/>
    <property type="match status" value="1"/>
</dbReference>
<dbReference type="PANTHER" id="PTHR30560">
    <property type="entry name" value="TRIGGER FACTOR CHAPERONE AND PEPTIDYL-PROLYL CIS/TRANS ISOMERASE"/>
    <property type="match status" value="1"/>
</dbReference>
<dbReference type="PANTHER" id="PTHR30560:SF3">
    <property type="entry name" value="TRIGGER FACTOR-LIKE PROTEIN TIG, CHLOROPLASTIC"/>
    <property type="match status" value="1"/>
</dbReference>
<dbReference type="Pfam" id="PF00254">
    <property type="entry name" value="FKBP_C"/>
    <property type="match status" value="1"/>
</dbReference>
<dbReference type="Pfam" id="PF05698">
    <property type="entry name" value="Trigger_C"/>
    <property type="match status" value="1"/>
</dbReference>
<dbReference type="Pfam" id="PF05697">
    <property type="entry name" value="Trigger_N"/>
    <property type="match status" value="1"/>
</dbReference>
<dbReference type="PIRSF" id="PIRSF003095">
    <property type="entry name" value="Trigger_factor"/>
    <property type="match status" value="1"/>
</dbReference>
<dbReference type="SUPFAM" id="SSF54534">
    <property type="entry name" value="FKBP-like"/>
    <property type="match status" value="1"/>
</dbReference>
<dbReference type="SUPFAM" id="SSF109998">
    <property type="entry name" value="Triger factor/SurA peptide-binding domain-like"/>
    <property type="match status" value="1"/>
</dbReference>
<dbReference type="SUPFAM" id="SSF102735">
    <property type="entry name" value="Trigger factor ribosome-binding domain"/>
    <property type="match status" value="1"/>
</dbReference>
<dbReference type="PROSITE" id="PS50059">
    <property type="entry name" value="FKBP_PPIASE"/>
    <property type="match status" value="1"/>
</dbReference>
<sequence length="473" mass="52059">MQVTEINAQGLKREFQVLLAAQELEERLTNELSGMKDKVQLKGFRPGKVPVAHLRKVYGRSVMAEVVQNAVNEANRQIVTDNGLKLALEPQVEFPTDQAEVEKALDAKGDLAFKVALEVMPSFELADLSDVSLTKLVAKPSDAEVDEALDRMAGQSRPFTEREEGAEAQSGDRVTIDFVGRIDGEEFQGGKGEGIDLELGSGSFIPGFEDQLVGAKVGDKRLVKVTFPESYGAEHLAGKDAEFDVTVTKIQAAGEAKIDDEFAKSMGMESLEKLREAVSEAIGRDFEAASRRRLKKELLDALDGKYAFELPPSLVAQEFAAVWAQVEQDLKTRGKTFEDEDTTEEKAQAEYRKIAERRVRLGLVLAQVGESADIKVSDEEVNQALIARVRQFPGQEQQVWDFYRKNAQALAELRAPLFEEKVVDHVLGQVKLVEEPVSKEALFADEDGDDTTGGKPADKAEAKDESKTEAKAD</sequence>
<evidence type="ECO:0000255" key="1">
    <source>
        <dbReference type="HAMAP-Rule" id="MF_00303"/>
    </source>
</evidence>
<evidence type="ECO:0000256" key="2">
    <source>
        <dbReference type="SAM" id="MobiDB-lite"/>
    </source>
</evidence>
<gene>
    <name evidence="1" type="primary">tig</name>
    <name type="ordered locus">Mrad2831_5133</name>
</gene>
<name>TIG_METRJ</name>
<accession>B1LV84</accession>
<organism>
    <name type="scientific">Methylobacterium radiotolerans (strain ATCC 27329 / DSM 1819 / JCM 2831 / NBRC 15690 / NCIMB 10815 / 0-1)</name>
    <dbReference type="NCBI Taxonomy" id="426355"/>
    <lineage>
        <taxon>Bacteria</taxon>
        <taxon>Pseudomonadati</taxon>
        <taxon>Pseudomonadota</taxon>
        <taxon>Alphaproteobacteria</taxon>
        <taxon>Hyphomicrobiales</taxon>
        <taxon>Methylobacteriaceae</taxon>
        <taxon>Methylobacterium</taxon>
    </lineage>
</organism>
<proteinExistence type="inferred from homology"/>
<reference key="1">
    <citation type="submission" date="2008-03" db="EMBL/GenBank/DDBJ databases">
        <title>Complete sequence of chromosome of Methylobacterium radiotolerans JCM 2831.</title>
        <authorList>
            <consortium name="US DOE Joint Genome Institute"/>
            <person name="Copeland A."/>
            <person name="Lucas S."/>
            <person name="Lapidus A."/>
            <person name="Glavina del Rio T."/>
            <person name="Dalin E."/>
            <person name="Tice H."/>
            <person name="Bruce D."/>
            <person name="Goodwin L."/>
            <person name="Pitluck S."/>
            <person name="Kiss H."/>
            <person name="Brettin T."/>
            <person name="Detter J.C."/>
            <person name="Han C."/>
            <person name="Kuske C.R."/>
            <person name="Schmutz J."/>
            <person name="Larimer F."/>
            <person name="Land M."/>
            <person name="Hauser L."/>
            <person name="Kyrpides N."/>
            <person name="Mikhailova N."/>
            <person name="Marx C.J."/>
            <person name="Richardson P."/>
        </authorList>
    </citation>
    <scope>NUCLEOTIDE SEQUENCE [LARGE SCALE GENOMIC DNA]</scope>
    <source>
        <strain>ATCC 27329 / DSM 1819 / JCM 2831 / NBRC 15690 / NCIMB 10815 / 0-1</strain>
    </source>
</reference>
<feature type="chain" id="PRO_1000115554" description="Trigger factor">
    <location>
        <begin position="1"/>
        <end position="473"/>
    </location>
</feature>
<feature type="domain" description="PPIase FKBP-type" evidence="1">
    <location>
        <begin position="171"/>
        <end position="256"/>
    </location>
</feature>
<feature type="region of interest" description="Disordered" evidence="2">
    <location>
        <begin position="439"/>
        <end position="473"/>
    </location>
</feature>
<feature type="compositionally biased region" description="Basic and acidic residues" evidence="2">
    <location>
        <begin position="456"/>
        <end position="473"/>
    </location>
</feature>